<reference key="1">
    <citation type="journal article" date="2000" name="Nature">
        <title>Complete genome sequence of Pseudomonas aeruginosa PAO1, an opportunistic pathogen.</title>
        <authorList>
            <person name="Stover C.K."/>
            <person name="Pham X.-Q.T."/>
            <person name="Erwin A.L."/>
            <person name="Mizoguchi S.D."/>
            <person name="Warrener P."/>
            <person name="Hickey M.J."/>
            <person name="Brinkman F.S.L."/>
            <person name="Hufnagle W.O."/>
            <person name="Kowalik D.J."/>
            <person name="Lagrou M."/>
            <person name="Garber R.L."/>
            <person name="Goltry L."/>
            <person name="Tolentino E."/>
            <person name="Westbrock-Wadman S."/>
            <person name="Yuan Y."/>
            <person name="Brody L.L."/>
            <person name="Coulter S.N."/>
            <person name="Folger K.R."/>
            <person name="Kas A."/>
            <person name="Larbig K."/>
            <person name="Lim R.M."/>
            <person name="Smith K.A."/>
            <person name="Spencer D.H."/>
            <person name="Wong G.K.-S."/>
            <person name="Wu Z."/>
            <person name="Paulsen I.T."/>
            <person name="Reizer J."/>
            <person name="Saier M.H. Jr."/>
            <person name="Hancock R.E.W."/>
            <person name="Lory S."/>
            <person name="Olson M.V."/>
        </authorList>
    </citation>
    <scope>NUCLEOTIDE SEQUENCE [LARGE SCALE GENOMIC DNA]</scope>
    <source>
        <strain>ATCC 15692 / DSM 22644 / CIP 104116 / JCM 14847 / LMG 12228 / 1C / PRS 101 / PAO1</strain>
    </source>
</reference>
<name>YBEY_PSEAE</name>
<accession>Q9HX37</accession>
<feature type="chain" id="PRO_0000102510" description="Endoribonuclease YbeY">
    <location>
        <begin position="1"/>
        <end position="160"/>
    </location>
</feature>
<feature type="region of interest" description="Disordered" evidence="2">
    <location>
        <begin position="141"/>
        <end position="160"/>
    </location>
</feature>
<feature type="binding site" evidence="1">
    <location>
        <position position="112"/>
    </location>
    <ligand>
        <name>Zn(2+)</name>
        <dbReference type="ChEBI" id="CHEBI:29105"/>
        <note>catalytic</note>
    </ligand>
</feature>
<feature type="binding site" evidence="1">
    <location>
        <position position="116"/>
    </location>
    <ligand>
        <name>Zn(2+)</name>
        <dbReference type="ChEBI" id="CHEBI:29105"/>
        <note>catalytic</note>
    </ligand>
</feature>
<feature type="binding site" evidence="1">
    <location>
        <position position="122"/>
    </location>
    <ligand>
        <name>Zn(2+)</name>
        <dbReference type="ChEBI" id="CHEBI:29105"/>
        <note>catalytic</note>
    </ligand>
</feature>
<keyword id="KW-0963">Cytoplasm</keyword>
<keyword id="KW-0255">Endonuclease</keyword>
<keyword id="KW-0378">Hydrolase</keyword>
<keyword id="KW-0479">Metal-binding</keyword>
<keyword id="KW-0540">Nuclease</keyword>
<keyword id="KW-1185">Reference proteome</keyword>
<keyword id="KW-0690">Ribosome biogenesis</keyword>
<keyword id="KW-0698">rRNA processing</keyword>
<keyword id="KW-0862">Zinc</keyword>
<dbReference type="EC" id="3.1.-.-" evidence="1"/>
<dbReference type="EMBL" id="AE004091">
    <property type="protein sequence ID" value="AAG07369.1"/>
    <property type="molecule type" value="Genomic_DNA"/>
</dbReference>
<dbReference type="PIR" id="H83147">
    <property type="entry name" value="H83147"/>
</dbReference>
<dbReference type="RefSeq" id="NP_252671.1">
    <property type="nucleotide sequence ID" value="NC_002516.2"/>
</dbReference>
<dbReference type="RefSeq" id="WP_003093160.1">
    <property type="nucleotide sequence ID" value="NZ_QZGE01000001.1"/>
</dbReference>
<dbReference type="SMR" id="Q9HX37"/>
<dbReference type="FunCoup" id="Q9HX37">
    <property type="interactions" value="277"/>
</dbReference>
<dbReference type="STRING" id="208964.PA3982"/>
<dbReference type="PaxDb" id="208964-PA3982"/>
<dbReference type="DNASU" id="878897"/>
<dbReference type="GeneID" id="878897"/>
<dbReference type="KEGG" id="pae:PA3982"/>
<dbReference type="PATRIC" id="fig|208964.12.peg.4174"/>
<dbReference type="PseudoCAP" id="PA3982"/>
<dbReference type="HOGENOM" id="CLU_106710_0_1_6"/>
<dbReference type="InParanoid" id="Q9HX37"/>
<dbReference type="OrthoDB" id="9807740at2"/>
<dbReference type="PhylomeDB" id="Q9HX37"/>
<dbReference type="BioCyc" id="PAER208964:G1FZ6-4056-MONOMER"/>
<dbReference type="Proteomes" id="UP000002438">
    <property type="component" value="Chromosome"/>
</dbReference>
<dbReference type="GO" id="GO:0005737">
    <property type="term" value="C:cytoplasm"/>
    <property type="evidence" value="ECO:0007669"/>
    <property type="project" value="UniProtKB-SubCell"/>
</dbReference>
<dbReference type="GO" id="GO:0004222">
    <property type="term" value="F:metalloendopeptidase activity"/>
    <property type="evidence" value="ECO:0007669"/>
    <property type="project" value="InterPro"/>
</dbReference>
<dbReference type="GO" id="GO:0004521">
    <property type="term" value="F:RNA endonuclease activity"/>
    <property type="evidence" value="ECO:0007669"/>
    <property type="project" value="UniProtKB-UniRule"/>
</dbReference>
<dbReference type="GO" id="GO:0008270">
    <property type="term" value="F:zinc ion binding"/>
    <property type="evidence" value="ECO:0007669"/>
    <property type="project" value="UniProtKB-UniRule"/>
</dbReference>
<dbReference type="GO" id="GO:0006364">
    <property type="term" value="P:rRNA processing"/>
    <property type="evidence" value="ECO:0007669"/>
    <property type="project" value="UniProtKB-UniRule"/>
</dbReference>
<dbReference type="Gene3D" id="3.40.390.30">
    <property type="entry name" value="Metalloproteases ('zincins'), catalytic domain"/>
    <property type="match status" value="1"/>
</dbReference>
<dbReference type="HAMAP" id="MF_00009">
    <property type="entry name" value="Endoribonucl_YbeY"/>
    <property type="match status" value="1"/>
</dbReference>
<dbReference type="InterPro" id="IPR023091">
    <property type="entry name" value="MetalPrtase_cat_dom_sf_prd"/>
</dbReference>
<dbReference type="InterPro" id="IPR002036">
    <property type="entry name" value="YbeY"/>
</dbReference>
<dbReference type="InterPro" id="IPR020549">
    <property type="entry name" value="YbeY_CS"/>
</dbReference>
<dbReference type="NCBIfam" id="TIGR00043">
    <property type="entry name" value="rRNA maturation RNase YbeY"/>
    <property type="match status" value="1"/>
</dbReference>
<dbReference type="PANTHER" id="PTHR46986">
    <property type="entry name" value="ENDORIBONUCLEASE YBEY, CHLOROPLASTIC"/>
    <property type="match status" value="1"/>
</dbReference>
<dbReference type="PANTHER" id="PTHR46986:SF1">
    <property type="entry name" value="ENDORIBONUCLEASE YBEY, CHLOROPLASTIC"/>
    <property type="match status" value="1"/>
</dbReference>
<dbReference type="Pfam" id="PF02130">
    <property type="entry name" value="YbeY"/>
    <property type="match status" value="1"/>
</dbReference>
<dbReference type="SUPFAM" id="SSF55486">
    <property type="entry name" value="Metalloproteases ('zincins'), catalytic domain"/>
    <property type="match status" value="1"/>
</dbReference>
<dbReference type="PROSITE" id="PS01306">
    <property type="entry name" value="UPF0054"/>
    <property type="match status" value="1"/>
</dbReference>
<comment type="function">
    <text evidence="1">Single strand-specific metallo-endoribonuclease involved in late-stage 70S ribosome quality control and in maturation of the 3' terminus of the 16S rRNA.</text>
</comment>
<comment type="cofactor">
    <cofactor evidence="1">
        <name>Zn(2+)</name>
        <dbReference type="ChEBI" id="CHEBI:29105"/>
    </cofactor>
    <text evidence="1">Binds 1 zinc ion.</text>
</comment>
<comment type="subcellular location">
    <subcellularLocation>
        <location evidence="1">Cytoplasm</location>
    </subcellularLocation>
</comment>
<comment type="similarity">
    <text evidence="1">Belongs to the endoribonuclease YbeY family.</text>
</comment>
<gene>
    <name evidence="1" type="primary">ybeY</name>
    <name type="ordered locus">PA3982</name>
</gene>
<organism>
    <name type="scientific">Pseudomonas aeruginosa (strain ATCC 15692 / DSM 22644 / CIP 104116 / JCM 14847 / LMG 12228 / 1C / PRS 101 / PAO1)</name>
    <dbReference type="NCBI Taxonomy" id="208964"/>
    <lineage>
        <taxon>Bacteria</taxon>
        <taxon>Pseudomonadati</taxon>
        <taxon>Pseudomonadota</taxon>
        <taxon>Gammaproteobacteria</taxon>
        <taxon>Pseudomonadales</taxon>
        <taxon>Pseudomonadaceae</taxon>
        <taxon>Pseudomonas</taxon>
    </lineage>
</organism>
<evidence type="ECO:0000255" key="1">
    <source>
        <dbReference type="HAMAP-Rule" id="MF_00009"/>
    </source>
</evidence>
<evidence type="ECO:0000256" key="2">
    <source>
        <dbReference type="SAM" id="MobiDB-lite"/>
    </source>
</evidence>
<protein>
    <recommendedName>
        <fullName evidence="1">Endoribonuclease YbeY</fullName>
        <ecNumber evidence="1">3.1.-.-</ecNumber>
    </recommendedName>
</protein>
<sequence>MPLELDLQVASAAPDLPSEAQFRAWCELALRQRPESELTIRLVDEAEGLELNSTYRHKDYATNVLSFPADVPDELLDIPLLGDLVICAPVVAREALEQRKPLQAHWAHLVIHGCLHLLGYDHIDDAEAEEMETLERELLAELGHPDPYACDDEEPPSKEK</sequence>
<proteinExistence type="inferred from homology"/>